<keyword id="KW-0997">Cell inner membrane</keyword>
<keyword id="KW-1003">Cell membrane</keyword>
<keyword id="KW-0201">Cytochrome c-type biogenesis</keyword>
<keyword id="KW-0349">Heme</keyword>
<keyword id="KW-0408">Iron</keyword>
<keyword id="KW-0472">Membrane</keyword>
<keyword id="KW-0479">Metal-binding</keyword>
<keyword id="KW-1185">Reference proteome</keyword>
<keyword id="KW-0735">Signal-anchor</keyword>
<keyword id="KW-0812">Transmembrane</keyword>
<keyword id="KW-1133">Transmembrane helix</keyword>
<sequence>MNPRRKKRLGLILALFVGISATVGLMLYALNQNMDLFYTPTELVNGKPDGTKPEVGQRLRIGGMVVAGSVVRDNNSLEVSFKVADVGPQVTVIYDGILPDLFREGQGIVAQGVLVDATTIKAHEVLAKHDEEYMPPEVAEAMKKTHEPLQYTEQQKQGTGQ</sequence>
<comment type="function">
    <text evidence="1">Heme chaperone required for the biogenesis of c-type cytochromes. Transiently binds heme delivered by CcmC and transfers the heme to apo-cytochromes in a process facilitated by CcmF and CcmH.</text>
</comment>
<comment type="subcellular location">
    <subcellularLocation>
        <location evidence="1">Cell inner membrane</location>
        <topology evidence="1">Single-pass type II membrane protein</topology>
        <orientation evidence="1">Periplasmic side</orientation>
    </subcellularLocation>
</comment>
<comment type="similarity">
    <text evidence="1">Belongs to the CcmE/CycJ family.</text>
</comment>
<gene>
    <name evidence="1" type="primary">ccmE</name>
    <name evidence="1" type="synonym">cycJ</name>
    <name type="ordered locus">VF_1820</name>
</gene>
<organism>
    <name type="scientific">Aliivibrio fischeri (strain ATCC 700601 / ES114)</name>
    <name type="common">Vibrio fischeri</name>
    <dbReference type="NCBI Taxonomy" id="312309"/>
    <lineage>
        <taxon>Bacteria</taxon>
        <taxon>Pseudomonadati</taxon>
        <taxon>Pseudomonadota</taxon>
        <taxon>Gammaproteobacteria</taxon>
        <taxon>Vibrionales</taxon>
        <taxon>Vibrionaceae</taxon>
        <taxon>Aliivibrio</taxon>
    </lineage>
</organism>
<protein>
    <recommendedName>
        <fullName evidence="1">Cytochrome c-type biogenesis protein CcmE</fullName>
    </recommendedName>
    <alternativeName>
        <fullName evidence="1">Cytochrome c maturation protein E</fullName>
    </alternativeName>
    <alternativeName>
        <fullName evidence="1">Heme chaperone CcmE</fullName>
    </alternativeName>
</protein>
<evidence type="ECO:0000255" key="1">
    <source>
        <dbReference type="HAMAP-Rule" id="MF_01959"/>
    </source>
</evidence>
<evidence type="ECO:0000256" key="2">
    <source>
        <dbReference type="SAM" id="MobiDB-lite"/>
    </source>
</evidence>
<proteinExistence type="inferred from homology"/>
<accession>Q5E3T1</accession>
<name>CCME_ALIF1</name>
<reference key="1">
    <citation type="journal article" date="2005" name="Proc. Natl. Acad. Sci. U.S.A.">
        <title>Complete genome sequence of Vibrio fischeri: a symbiotic bacterium with pathogenic congeners.</title>
        <authorList>
            <person name="Ruby E.G."/>
            <person name="Urbanowski M."/>
            <person name="Campbell J."/>
            <person name="Dunn A."/>
            <person name="Faini M."/>
            <person name="Gunsalus R."/>
            <person name="Lostroh P."/>
            <person name="Lupp C."/>
            <person name="McCann J."/>
            <person name="Millikan D."/>
            <person name="Schaefer A."/>
            <person name="Stabb E."/>
            <person name="Stevens A."/>
            <person name="Visick K."/>
            <person name="Whistler C."/>
            <person name="Greenberg E.P."/>
        </authorList>
    </citation>
    <scope>NUCLEOTIDE SEQUENCE [LARGE SCALE GENOMIC DNA]</scope>
    <source>
        <strain>ATCC 700601 / ES114</strain>
    </source>
</reference>
<dbReference type="EMBL" id="CP000020">
    <property type="protein sequence ID" value="AAW86315.1"/>
    <property type="molecule type" value="Genomic_DNA"/>
</dbReference>
<dbReference type="RefSeq" id="WP_011262347.1">
    <property type="nucleotide sequence ID" value="NC_006840.2"/>
</dbReference>
<dbReference type="RefSeq" id="YP_205203.1">
    <property type="nucleotide sequence ID" value="NC_006840.2"/>
</dbReference>
<dbReference type="SMR" id="Q5E3T1"/>
<dbReference type="STRING" id="312309.VF_1820"/>
<dbReference type="EnsemblBacteria" id="AAW86315">
    <property type="protein sequence ID" value="AAW86315"/>
    <property type="gene ID" value="VF_1820"/>
</dbReference>
<dbReference type="GeneID" id="54164521"/>
<dbReference type="KEGG" id="vfi:VF_1820"/>
<dbReference type="PATRIC" id="fig|312309.11.peg.1848"/>
<dbReference type="eggNOG" id="COG2332">
    <property type="taxonomic scope" value="Bacteria"/>
</dbReference>
<dbReference type="HOGENOM" id="CLU_079503_1_0_6"/>
<dbReference type="OrthoDB" id="9793584at2"/>
<dbReference type="Proteomes" id="UP000000537">
    <property type="component" value="Chromosome I"/>
</dbReference>
<dbReference type="GO" id="GO:0005886">
    <property type="term" value="C:plasma membrane"/>
    <property type="evidence" value="ECO:0007669"/>
    <property type="project" value="UniProtKB-SubCell"/>
</dbReference>
<dbReference type="GO" id="GO:0020037">
    <property type="term" value="F:heme binding"/>
    <property type="evidence" value="ECO:0007669"/>
    <property type="project" value="InterPro"/>
</dbReference>
<dbReference type="GO" id="GO:0046872">
    <property type="term" value="F:metal ion binding"/>
    <property type="evidence" value="ECO:0007669"/>
    <property type="project" value="UniProtKB-KW"/>
</dbReference>
<dbReference type="GO" id="GO:0017004">
    <property type="term" value="P:cytochrome complex assembly"/>
    <property type="evidence" value="ECO:0007669"/>
    <property type="project" value="UniProtKB-KW"/>
</dbReference>
<dbReference type="FunFam" id="2.40.50.140:FF:000104">
    <property type="entry name" value="Cytochrome c-type biogenesis protein CcmE"/>
    <property type="match status" value="1"/>
</dbReference>
<dbReference type="Gene3D" id="2.40.50.140">
    <property type="entry name" value="Nucleic acid-binding proteins"/>
    <property type="match status" value="1"/>
</dbReference>
<dbReference type="HAMAP" id="MF_01959">
    <property type="entry name" value="CcmE"/>
    <property type="match status" value="1"/>
</dbReference>
<dbReference type="InterPro" id="IPR004329">
    <property type="entry name" value="CcmE"/>
</dbReference>
<dbReference type="InterPro" id="IPR036127">
    <property type="entry name" value="CcmE-like_sf"/>
</dbReference>
<dbReference type="InterPro" id="IPR012340">
    <property type="entry name" value="NA-bd_OB-fold"/>
</dbReference>
<dbReference type="NCBIfam" id="NF009638">
    <property type="entry name" value="PRK13165.1"/>
    <property type="match status" value="1"/>
</dbReference>
<dbReference type="NCBIfam" id="NF009727">
    <property type="entry name" value="PRK13254.1-1"/>
    <property type="match status" value="1"/>
</dbReference>
<dbReference type="NCBIfam" id="NF009729">
    <property type="entry name" value="PRK13254.1-3"/>
    <property type="match status" value="1"/>
</dbReference>
<dbReference type="NCBIfam" id="NF009731">
    <property type="entry name" value="PRK13254.1-5"/>
    <property type="match status" value="1"/>
</dbReference>
<dbReference type="PANTHER" id="PTHR34128">
    <property type="entry name" value="CYTOCHROME C-TYPE BIOGENESIS PROTEIN CCME HOMOLOG, MITOCHONDRIAL"/>
    <property type="match status" value="1"/>
</dbReference>
<dbReference type="PANTHER" id="PTHR34128:SF2">
    <property type="entry name" value="CYTOCHROME C-TYPE BIOGENESIS PROTEIN CCME HOMOLOG, MITOCHONDRIAL"/>
    <property type="match status" value="1"/>
</dbReference>
<dbReference type="Pfam" id="PF03100">
    <property type="entry name" value="CcmE"/>
    <property type="match status" value="1"/>
</dbReference>
<dbReference type="SUPFAM" id="SSF82093">
    <property type="entry name" value="Heme chaperone CcmE"/>
    <property type="match status" value="1"/>
</dbReference>
<feature type="chain" id="PRO_0000238873" description="Cytochrome c-type biogenesis protein CcmE">
    <location>
        <begin position="1"/>
        <end position="161"/>
    </location>
</feature>
<feature type="topological domain" description="Cytoplasmic" evidence="1">
    <location>
        <begin position="1"/>
        <end position="8"/>
    </location>
</feature>
<feature type="transmembrane region" description="Helical; Signal-anchor for type II membrane protein" evidence="1">
    <location>
        <begin position="9"/>
        <end position="29"/>
    </location>
</feature>
<feature type="topological domain" description="Periplasmic" evidence="1">
    <location>
        <begin position="30"/>
        <end position="161"/>
    </location>
</feature>
<feature type="region of interest" description="Disordered" evidence="2">
    <location>
        <begin position="142"/>
        <end position="161"/>
    </location>
</feature>
<feature type="compositionally biased region" description="Polar residues" evidence="2">
    <location>
        <begin position="151"/>
        <end position="161"/>
    </location>
</feature>
<feature type="binding site" description="covalent" evidence="1">
    <location>
        <position position="129"/>
    </location>
    <ligand>
        <name>heme</name>
        <dbReference type="ChEBI" id="CHEBI:30413"/>
    </ligand>
</feature>
<feature type="binding site" description="axial binding residue" evidence="1">
    <location>
        <position position="133"/>
    </location>
    <ligand>
        <name>heme</name>
        <dbReference type="ChEBI" id="CHEBI:30413"/>
    </ligand>
    <ligandPart>
        <name>Fe</name>
        <dbReference type="ChEBI" id="CHEBI:18248"/>
    </ligandPart>
</feature>